<sequence>MSEPKQYVMTYEGVKKLEGELEYLKTVKRKEITEKIKVALGYGDLSENSEYDEAKNDQAFTEGKILQLENKLKNAVVVDESEIPKDIVSVGSKVKVKDYDFDEEVEYSIVGSAEADPMSFKISNESPVGNALVGKKIGDVVEVVVPDGVSKFEILDIKRG</sequence>
<gene>
    <name evidence="1" type="primary">greA</name>
    <name type="ordered locus">CLL_A0177</name>
</gene>
<proteinExistence type="inferred from homology"/>
<organism>
    <name type="scientific">Clostridium botulinum (strain Eklund 17B / Type B)</name>
    <dbReference type="NCBI Taxonomy" id="935198"/>
    <lineage>
        <taxon>Bacteria</taxon>
        <taxon>Bacillati</taxon>
        <taxon>Bacillota</taxon>
        <taxon>Clostridia</taxon>
        <taxon>Eubacteriales</taxon>
        <taxon>Clostridiaceae</taxon>
        <taxon>Clostridium</taxon>
    </lineage>
</organism>
<feature type="chain" id="PRO_1000094161" description="Transcription elongation factor GreA">
    <location>
        <begin position="1"/>
        <end position="160"/>
    </location>
</feature>
<feature type="coiled-coil region" evidence="1">
    <location>
        <begin position="49"/>
        <end position="75"/>
    </location>
</feature>
<dbReference type="EMBL" id="CP001056">
    <property type="protein sequence ID" value="ACD23137.1"/>
    <property type="molecule type" value="Genomic_DNA"/>
</dbReference>
<dbReference type="SMR" id="B2TI25"/>
<dbReference type="KEGG" id="cbk:CLL_A0177"/>
<dbReference type="PATRIC" id="fig|935198.13.peg.161"/>
<dbReference type="HOGENOM" id="CLU_101379_2_1_9"/>
<dbReference type="Proteomes" id="UP000001195">
    <property type="component" value="Chromosome"/>
</dbReference>
<dbReference type="GO" id="GO:0003677">
    <property type="term" value="F:DNA binding"/>
    <property type="evidence" value="ECO:0007669"/>
    <property type="project" value="UniProtKB-UniRule"/>
</dbReference>
<dbReference type="GO" id="GO:0070063">
    <property type="term" value="F:RNA polymerase binding"/>
    <property type="evidence" value="ECO:0007669"/>
    <property type="project" value="InterPro"/>
</dbReference>
<dbReference type="GO" id="GO:0006354">
    <property type="term" value="P:DNA-templated transcription elongation"/>
    <property type="evidence" value="ECO:0007669"/>
    <property type="project" value="TreeGrafter"/>
</dbReference>
<dbReference type="GO" id="GO:0032784">
    <property type="term" value="P:regulation of DNA-templated transcription elongation"/>
    <property type="evidence" value="ECO:0007669"/>
    <property type="project" value="UniProtKB-UniRule"/>
</dbReference>
<dbReference type="FunFam" id="1.10.287.180:FF:000001">
    <property type="entry name" value="Transcription elongation factor GreA"/>
    <property type="match status" value="1"/>
</dbReference>
<dbReference type="FunFam" id="3.10.50.30:FF:000001">
    <property type="entry name" value="Transcription elongation factor GreA"/>
    <property type="match status" value="1"/>
</dbReference>
<dbReference type="Gene3D" id="3.10.50.30">
    <property type="entry name" value="Transcription elongation factor, GreA/GreB, C-terminal domain"/>
    <property type="match status" value="1"/>
</dbReference>
<dbReference type="Gene3D" id="1.10.287.180">
    <property type="entry name" value="Transcription elongation factor, GreA/GreB, N-terminal domain"/>
    <property type="match status" value="1"/>
</dbReference>
<dbReference type="HAMAP" id="MF_00105">
    <property type="entry name" value="GreA_GreB"/>
    <property type="match status" value="1"/>
</dbReference>
<dbReference type="InterPro" id="IPR036953">
    <property type="entry name" value="GreA/GreB_C_sf"/>
</dbReference>
<dbReference type="InterPro" id="IPR018151">
    <property type="entry name" value="TF_GreA/GreB_CS"/>
</dbReference>
<dbReference type="InterPro" id="IPR006359">
    <property type="entry name" value="Tscrpt_elong_fac_GreA"/>
</dbReference>
<dbReference type="InterPro" id="IPR028624">
    <property type="entry name" value="Tscrpt_elong_fac_GreA/B"/>
</dbReference>
<dbReference type="InterPro" id="IPR001437">
    <property type="entry name" value="Tscrpt_elong_fac_GreA/B_C"/>
</dbReference>
<dbReference type="InterPro" id="IPR023459">
    <property type="entry name" value="Tscrpt_elong_fac_GreA/B_fam"/>
</dbReference>
<dbReference type="InterPro" id="IPR022691">
    <property type="entry name" value="Tscrpt_elong_fac_GreA/B_N"/>
</dbReference>
<dbReference type="InterPro" id="IPR036805">
    <property type="entry name" value="Tscrpt_elong_fac_GreA/B_N_sf"/>
</dbReference>
<dbReference type="NCBIfam" id="TIGR01462">
    <property type="entry name" value="greA"/>
    <property type="match status" value="1"/>
</dbReference>
<dbReference type="NCBIfam" id="NF001263">
    <property type="entry name" value="PRK00226.1-4"/>
    <property type="match status" value="1"/>
</dbReference>
<dbReference type="PANTHER" id="PTHR30437">
    <property type="entry name" value="TRANSCRIPTION ELONGATION FACTOR GREA"/>
    <property type="match status" value="1"/>
</dbReference>
<dbReference type="PANTHER" id="PTHR30437:SF4">
    <property type="entry name" value="TRANSCRIPTION ELONGATION FACTOR GREA"/>
    <property type="match status" value="1"/>
</dbReference>
<dbReference type="Pfam" id="PF01272">
    <property type="entry name" value="GreA_GreB"/>
    <property type="match status" value="1"/>
</dbReference>
<dbReference type="Pfam" id="PF03449">
    <property type="entry name" value="GreA_GreB_N"/>
    <property type="match status" value="1"/>
</dbReference>
<dbReference type="PIRSF" id="PIRSF006092">
    <property type="entry name" value="GreA_GreB"/>
    <property type="match status" value="1"/>
</dbReference>
<dbReference type="SUPFAM" id="SSF54534">
    <property type="entry name" value="FKBP-like"/>
    <property type="match status" value="1"/>
</dbReference>
<dbReference type="SUPFAM" id="SSF46557">
    <property type="entry name" value="GreA transcript cleavage protein, N-terminal domain"/>
    <property type="match status" value="1"/>
</dbReference>
<dbReference type="PROSITE" id="PS00829">
    <property type="entry name" value="GREAB_1"/>
    <property type="match status" value="1"/>
</dbReference>
<dbReference type="PROSITE" id="PS00830">
    <property type="entry name" value="GREAB_2"/>
    <property type="match status" value="1"/>
</dbReference>
<protein>
    <recommendedName>
        <fullName evidence="1">Transcription elongation factor GreA</fullName>
    </recommendedName>
    <alternativeName>
        <fullName evidence="1">Transcript cleavage factor GreA</fullName>
    </alternativeName>
</protein>
<evidence type="ECO:0000255" key="1">
    <source>
        <dbReference type="HAMAP-Rule" id="MF_00105"/>
    </source>
</evidence>
<accession>B2TI25</accession>
<comment type="function">
    <text evidence="1">Necessary for efficient RNA polymerase transcription elongation past template-encoded arresting sites. The arresting sites in DNA have the property of trapping a certain fraction of elongating RNA polymerases that pass through, resulting in locked ternary complexes. Cleavage of the nascent transcript by cleavage factors such as GreA or GreB allows the resumption of elongation from the new 3'terminus. GreA releases sequences of 2 to 3 nucleotides.</text>
</comment>
<comment type="similarity">
    <text evidence="1">Belongs to the GreA/GreB family.</text>
</comment>
<keyword id="KW-0175">Coiled coil</keyword>
<keyword id="KW-0238">DNA-binding</keyword>
<keyword id="KW-0804">Transcription</keyword>
<keyword id="KW-0805">Transcription regulation</keyword>
<name>GREA_CLOBB</name>
<reference key="1">
    <citation type="submission" date="2008-04" db="EMBL/GenBank/DDBJ databases">
        <title>Complete sequence of Clostridium botulinum strain Eklund.</title>
        <authorList>
            <person name="Brinkac L.M."/>
            <person name="Brown J.L."/>
            <person name="Bruce D."/>
            <person name="Detter C."/>
            <person name="Munk C."/>
            <person name="Smith L.A."/>
            <person name="Smith T.J."/>
            <person name="Sutton G."/>
            <person name="Brettin T.S."/>
        </authorList>
    </citation>
    <scope>NUCLEOTIDE SEQUENCE [LARGE SCALE GENOMIC DNA]</scope>
    <source>
        <strain>Eklund 17B / Type B</strain>
    </source>
</reference>